<reference key="1">
    <citation type="journal article" date="2005" name="Anim. Genet.">
        <title>Molecular cloning, polymorphism and mapping of the porcine SFRS1 gene.</title>
        <authorList>
            <person name="Wang H."/>
            <person name="Wang H.L."/>
            <person name="Zhu Z.M."/>
            <person name="Yang S.L."/>
            <person name="Li K."/>
        </authorList>
    </citation>
    <scope>NUCLEOTIDE SEQUENCE [GENOMIC DNA]</scope>
    <source>
        <tissue>Fetal skeletal muscle</tissue>
    </source>
</reference>
<gene>
    <name type="primary">SRSF1</name>
    <name type="synonym">SFRS1</name>
</gene>
<proteinExistence type="evidence at transcript level"/>
<protein>
    <recommendedName>
        <fullName>Serine/arginine-rich splicing factor 1</fullName>
    </recommendedName>
    <alternativeName>
        <fullName>Splicing factor, arginine/serine-rich 1</fullName>
    </alternativeName>
</protein>
<keyword id="KW-0007">Acetylation</keyword>
<keyword id="KW-0963">Cytoplasm</keyword>
<keyword id="KW-1017">Isopeptide bond</keyword>
<keyword id="KW-0488">Methylation</keyword>
<keyword id="KW-0507">mRNA processing</keyword>
<keyword id="KW-0508">mRNA splicing</keyword>
<keyword id="KW-0539">Nucleus</keyword>
<keyword id="KW-0597">Phosphoprotein</keyword>
<keyword id="KW-1185">Reference proteome</keyword>
<keyword id="KW-0677">Repeat</keyword>
<keyword id="KW-0694">RNA-binding</keyword>
<keyword id="KW-0747">Spliceosome</keyword>
<keyword id="KW-0832">Ubl conjugation</keyword>
<organism>
    <name type="scientific">Sus scrofa</name>
    <name type="common">Pig</name>
    <dbReference type="NCBI Taxonomy" id="9823"/>
    <lineage>
        <taxon>Eukaryota</taxon>
        <taxon>Metazoa</taxon>
        <taxon>Chordata</taxon>
        <taxon>Craniata</taxon>
        <taxon>Vertebrata</taxon>
        <taxon>Euteleostomi</taxon>
        <taxon>Mammalia</taxon>
        <taxon>Eutheria</taxon>
        <taxon>Laurasiatheria</taxon>
        <taxon>Artiodactyla</taxon>
        <taxon>Suina</taxon>
        <taxon>Suidae</taxon>
        <taxon>Sus</taxon>
    </lineage>
</organism>
<dbReference type="EMBL" id="DQ098951">
    <property type="protein sequence ID" value="AAZ86089.1"/>
    <property type="molecule type" value="Genomic_DNA"/>
</dbReference>
<dbReference type="EMBL" id="DQ098950">
    <property type="protein sequence ID" value="AAZ86088.1"/>
    <property type="molecule type" value="mRNA"/>
</dbReference>
<dbReference type="RefSeq" id="NP_001033096.1">
    <property type="nucleotide sequence ID" value="NM_001038007.1"/>
</dbReference>
<dbReference type="BMRB" id="Q3YLA6"/>
<dbReference type="SMR" id="Q3YLA6"/>
<dbReference type="FunCoup" id="Q3YLA6">
    <property type="interactions" value="3112"/>
</dbReference>
<dbReference type="STRING" id="9823.ENSSSCP00000057405"/>
<dbReference type="PaxDb" id="9823-ENSSSCP00000018680"/>
<dbReference type="PeptideAtlas" id="Q3YLA6"/>
<dbReference type="Ensembl" id="ENSSSCT00000043811.2">
    <property type="protein sequence ID" value="ENSSSCP00000057414.1"/>
    <property type="gene ID" value="ENSSSCG00000017626.5"/>
</dbReference>
<dbReference type="Ensembl" id="ENSSSCT00015085769.1">
    <property type="protein sequence ID" value="ENSSSCP00015034868.1"/>
    <property type="gene ID" value="ENSSSCG00015063911.1"/>
</dbReference>
<dbReference type="Ensembl" id="ENSSSCT00025025450.1">
    <property type="protein sequence ID" value="ENSSSCP00025010750.1"/>
    <property type="gene ID" value="ENSSSCG00025018725.1"/>
</dbReference>
<dbReference type="Ensembl" id="ENSSSCT00030071795.1">
    <property type="protein sequence ID" value="ENSSSCP00030032731.1"/>
    <property type="gene ID" value="ENSSSCG00030051510.1"/>
</dbReference>
<dbReference type="Ensembl" id="ENSSSCT00035089681.1">
    <property type="protein sequence ID" value="ENSSSCP00035037508.1"/>
    <property type="gene ID" value="ENSSSCG00035066552.1"/>
</dbReference>
<dbReference type="Ensembl" id="ENSSSCT00040020695.1">
    <property type="protein sequence ID" value="ENSSSCP00040008693.1"/>
    <property type="gene ID" value="ENSSSCG00040015341.1"/>
</dbReference>
<dbReference type="Ensembl" id="ENSSSCT00045035907.1">
    <property type="protein sequence ID" value="ENSSSCP00045024966.1"/>
    <property type="gene ID" value="ENSSSCG00045020995.1"/>
</dbReference>
<dbReference type="Ensembl" id="ENSSSCT00050046484.1">
    <property type="protein sequence ID" value="ENSSSCP00050019237.1"/>
    <property type="gene ID" value="ENSSSCG00050034576.1"/>
</dbReference>
<dbReference type="Ensembl" id="ENSSSCT00055034498.1">
    <property type="protein sequence ID" value="ENSSSCP00055027403.1"/>
    <property type="gene ID" value="ENSSSCG00055017510.1"/>
</dbReference>
<dbReference type="Ensembl" id="ENSSSCT00060028231.1">
    <property type="protein sequence ID" value="ENSSSCP00060012096.1"/>
    <property type="gene ID" value="ENSSSCG00060020808.1"/>
</dbReference>
<dbReference type="Ensembl" id="ENSSSCT00065037964.1">
    <property type="protein sequence ID" value="ENSSSCP00065016013.1"/>
    <property type="gene ID" value="ENSSSCG00065028144.1"/>
</dbReference>
<dbReference type="Ensembl" id="ENSSSCT00085042391">
    <property type="protein sequence ID" value="ENSSSCP00085029785"/>
    <property type="gene ID" value="ENSSSCG00085022091"/>
</dbReference>
<dbReference type="Ensembl" id="ENSSSCT00090009213">
    <property type="protein sequence ID" value="ENSSSCP00090005542"/>
    <property type="gene ID" value="ENSSSCG00090005271"/>
</dbReference>
<dbReference type="Ensembl" id="ENSSSCT00105033747">
    <property type="protein sequence ID" value="ENSSSCP00105023551"/>
    <property type="gene ID" value="ENSSSCG00105017487"/>
</dbReference>
<dbReference type="Ensembl" id="ENSSSCT00110034745">
    <property type="protein sequence ID" value="ENSSSCP00110023642"/>
    <property type="gene ID" value="ENSSSCG00110018171"/>
</dbReference>
<dbReference type="Ensembl" id="ENSSSCT00115025836">
    <property type="protein sequence ID" value="ENSSSCP00115024478"/>
    <property type="gene ID" value="ENSSSCG00115014861"/>
</dbReference>
<dbReference type="Ensembl" id="ENSSSCT00130038171">
    <property type="protein sequence ID" value="ENSSSCP00130026850"/>
    <property type="gene ID" value="ENSSSCG00130019672"/>
</dbReference>
<dbReference type="GeneID" id="654327"/>
<dbReference type="KEGG" id="ssc:654327"/>
<dbReference type="CTD" id="6426"/>
<dbReference type="VGNC" id="VGNC:99084">
    <property type="gene designation" value="SRSF1"/>
</dbReference>
<dbReference type="eggNOG" id="KOG0105">
    <property type="taxonomic scope" value="Eukaryota"/>
</dbReference>
<dbReference type="GeneTree" id="ENSGT00940000155585"/>
<dbReference type="HOGENOM" id="CLU_012062_34_0_1"/>
<dbReference type="InParanoid" id="Q3YLA6"/>
<dbReference type="OMA" id="PREPAYP"/>
<dbReference type="OrthoDB" id="1099063at2759"/>
<dbReference type="TreeFam" id="TF106261"/>
<dbReference type="Reactome" id="R-SSC-159236">
    <property type="pathway name" value="Transport of Mature mRNA derived from an Intron-Containing Transcript"/>
</dbReference>
<dbReference type="Reactome" id="R-SSC-72163">
    <property type="pathway name" value="mRNA Splicing - Major Pathway"/>
</dbReference>
<dbReference type="Reactome" id="R-SSC-72165">
    <property type="pathway name" value="mRNA Splicing - Minor Pathway"/>
</dbReference>
<dbReference type="Reactome" id="R-SSC-72187">
    <property type="pathway name" value="mRNA 3'-end processing"/>
</dbReference>
<dbReference type="Reactome" id="R-SSC-72203">
    <property type="pathway name" value="Processing of Capped Intron-Containing Pre-mRNA"/>
</dbReference>
<dbReference type="Reactome" id="R-SSC-73856">
    <property type="pathway name" value="RNA Polymerase II Transcription Termination"/>
</dbReference>
<dbReference type="Proteomes" id="UP000008227">
    <property type="component" value="Chromosome 12"/>
</dbReference>
<dbReference type="Proteomes" id="UP000314985">
    <property type="component" value="Unplaced"/>
</dbReference>
<dbReference type="Proteomes" id="UP000694570">
    <property type="component" value="Unplaced"/>
</dbReference>
<dbReference type="Proteomes" id="UP000694571">
    <property type="component" value="Unplaced"/>
</dbReference>
<dbReference type="Proteomes" id="UP000694720">
    <property type="component" value="Unplaced"/>
</dbReference>
<dbReference type="Proteomes" id="UP000694722">
    <property type="component" value="Unplaced"/>
</dbReference>
<dbReference type="Proteomes" id="UP000694723">
    <property type="component" value="Unplaced"/>
</dbReference>
<dbReference type="Proteomes" id="UP000694724">
    <property type="component" value="Unplaced"/>
</dbReference>
<dbReference type="Proteomes" id="UP000694725">
    <property type="component" value="Unplaced"/>
</dbReference>
<dbReference type="Proteomes" id="UP000694726">
    <property type="component" value="Unplaced"/>
</dbReference>
<dbReference type="Proteomes" id="UP000694727">
    <property type="component" value="Unplaced"/>
</dbReference>
<dbReference type="Proteomes" id="UP000694728">
    <property type="component" value="Unplaced"/>
</dbReference>
<dbReference type="Bgee" id="ENSSSCG00000017626">
    <property type="expression patterns" value="Expressed in hindlimb bud and 43 other cell types or tissues"/>
</dbReference>
<dbReference type="ExpressionAtlas" id="Q3YLA6">
    <property type="expression patterns" value="baseline and differential"/>
</dbReference>
<dbReference type="GO" id="GO:0005737">
    <property type="term" value="C:cytoplasm"/>
    <property type="evidence" value="ECO:0000250"/>
    <property type="project" value="UniProtKB"/>
</dbReference>
<dbReference type="GO" id="GO:0016607">
    <property type="term" value="C:nuclear speck"/>
    <property type="evidence" value="ECO:0000250"/>
    <property type="project" value="UniProtKB"/>
</dbReference>
<dbReference type="GO" id="GO:0005654">
    <property type="term" value="C:nucleoplasm"/>
    <property type="evidence" value="ECO:0000250"/>
    <property type="project" value="UniProtKB"/>
</dbReference>
<dbReference type="GO" id="GO:0005634">
    <property type="term" value="C:nucleus"/>
    <property type="evidence" value="ECO:0000250"/>
    <property type="project" value="UniProtKB"/>
</dbReference>
<dbReference type="GO" id="GO:0005681">
    <property type="term" value="C:spliceosomal complex"/>
    <property type="evidence" value="ECO:0007669"/>
    <property type="project" value="UniProtKB-KW"/>
</dbReference>
<dbReference type="GO" id="GO:0003729">
    <property type="term" value="F:mRNA binding"/>
    <property type="evidence" value="ECO:0000318"/>
    <property type="project" value="GO_Central"/>
</dbReference>
<dbReference type="GO" id="GO:0003723">
    <property type="term" value="F:RNA binding"/>
    <property type="evidence" value="ECO:0000250"/>
    <property type="project" value="UniProtKB"/>
</dbReference>
<dbReference type="GO" id="GO:0000380">
    <property type="term" value="P:alternative mRNA splicing, via spliceosome"/>
    <property type="evidence" value="ECO:0000318"/>
    <property type="project" value="GO_Central"/>
</dbReference>
<dbReference type="GO" id="GO:0000395">
    <property type="term" value="P:mRNA 5'-splice site recognition"/>
    <property type="evidence" value="ECO:0000250"/>
    <property type="project" value="UniProtKB"/>
</dbReference>
<dbReference type="GO" id="GO:0043484">
    <property type="term" value="P:regulation of RNA splicing"/>
    <property type="evidence" value="ECO:0000250"/>
    <property type="project" value="UniProtKB"/>
</dbReference>
<dbReference type="CDD" id="cd12597">
    <property type="entry name" value="RRM1_SRSF1"/>
    <property type="match status" value="1"/>
</dbReference>
<dbReference type="CDD" id="cd12767">
    <property type="entry name" value="RRM2_SRSF1"/>
    <property type="match status" value="1"/>
</dbReference>
<dbReference type="FunFam" id="3.30.70.330:FF:000053">
    <property type="entry name" value="Serine/arginine-rich splicing factor 1"/>
    <property type="match status" value="1"/>
</dbReference>
<dbReference type="FunFam" id="3.30.70.330:FF:000170">
    <property type="entry name" value="Serine/arginine-rich splicing factor 1"/>
    <property type="match status" value="1"/>
</dbReference>
<dbReference type="Gene3D" id="3.30.70.330">
    <property type="match status" value="2"/>
</dbReference>
<dbReference type="InterPro" id="IPR012677">
    <property type="entry name" value="Nucleotide-bd_a/b_plait_sf"/>
</dbReference>
<dbReference type="InterPro" id="IPR035979">
    <property type="entry name" value="RBD_domain_sf"/>
</dbReference>
<dbReference type="InterPro" id="IPR000504">
    <property type="entry name" value="RRM_dom"/>
</dbReference>
<dbReference type="InterPro" id="IPR050374">
    <property type="entry name" value="RRT5_SRSF_SR"/>
</dbReference>
<dbReference type="InterPro" id="IPR034520">
    <property type="entry name" value="SRSF1_RRM1"/>
</dbReference>
<dbReference type="InterPro" id="IPR029538">
    <property type="entry name" value="SRSF1_RRM2"/>
</dbReference>
<dbReference type="PANTHER" id="PTHR23003">
    <property type="entry name" value="RNA RECOGNITION MOTIF RRM DOMAIN CONTAINING PROTEIN"/>
    <property type="match status" value="1"/>
</dbReference>
<dbReference type="PANTHER" id="PTHR23003:SF66">
    <property type="entry name" value="SERINE_ARGININE-RICH SPLICING FACTOR 1"/>
    <property type="match status" value="1"/>
</dbReference>
<dbReference type="Pfam" id="PF00076">
    <property type="entry name" value="RRM_1"/>
    <property type="match status" value="2"/>
</dbReference>
<dbReference type="SMART" id="SM00360">
    <property type="entry name" value="RRM"/>
    <property type="match status" value="2"/>
</dbReference>
<dbReference type="SUPFAM" id="SSF54928">
    <property type="entry name" value="RNA-binding domain, RBD"/>
    <property type="match status" value="1"/>
</dbReference>
<dbReference type="PROSITE" id="PS50102">
    <property type="entry name" value="RRM"/>
    <property type="match status" value="2"/>
</dbReference>
<sequence length="248" mass="27745">MSGGGVIRGPAGNNDCRIYVGNLPPDIRTKDIEDVFYKYGAIRDIDLKNRRGGPPFAFVEFEDPRDAEDAVYGRDGYDYDGYRLRVEFPRSGRGTGRGGGGGGGGGAPRGRYGPPSRRSENRVVVSGLPPSGSWQDLKDHMREAGDVCYADVYRDGTGVVEFVRKEDMTYAVRKLDNTKFRSHEGETAYIRVKVDGPRSPSYGRSRSRSRSRSRSRSRSNSRSRSYSPRRSRGSPRYSPRHSRSRSRT</sequence>
<feature type="initiator methionine" description="Removed" evidence="2">
    <location>
        <position position="1"/>
    </location>
</feature>
<feature type="chain" id="PRO_0000247977" description="Serine/arginine-rich splicing factor 1">
    <location>
        <begin position="2"/>
        <end position="248"/>
    </location>
</feature>
<feature type="domain" description="RRM 1" evidence="5">
    <location>
        <begin position="16"/>
        <end position="91"/>
    </location>
</feature>
<feature type="domain" description="RRM 2" evidence="5">
    <location>
        <begin position="121"/>
        <end position="195"/>
    </location>
</feature>
<feature type="region of interest" description="Disordered" evidence="6">
    <location>
        <begin position="88"/>
        <end position="134"/>
    </location>
</feature>
<feature type="region of interest" description="Disordered" evidence="6">
    <location>
        <begin position="191"/>
        <end position="248"/>
    </location>
</feature>
<feature type="region of interest" description="Interaction with SAFB1" evidence="1">
    <location>
        <begin position="198"/>
        <end position="247"/>
    </location>
</feature>
<feature type="compositionally biased region" description="Gly residues" evidence="6">
    <location>
        <begin position="93"/>
        <end position="108"/>
    </location>
</feature>
<feature type="compositionally biased region" description="Basic residues" evidence="6">
    <location>
        <begin position="205"/>
        <end position="248"/>
    </location>
</feature>
<feature type="modified residue" description="N-acetylserine" evidence="2 4">
    <location>
        <position position="2"/>
    </location>
</feature>
<feature type="modified residue" description="Phosphoserine" evidence="2">
    <location>
        <position position="2"/>
    </location>
</feature>
<feature type="modified residue" description="N6-acetyllysine; alternate" evidence="2">
    <location>
        <position position="38"/>
    </location>
</feature>
<feature type="modified residue" description="Asymmetric dimethylarginine; alternate" evidence="2">
    <location>
        <position position="93"/>
    </location>
</feature>
<feature type="modified residue" description="Omega-N-methylarginine; alternate" evidence="2">
    <location>
        <position position="93"/>
    </location>
</feature>
<feature type="modified residue" description="Asymmetric dimethylarginine; alternate" evidence="2">
    <location>
        <position position="97"/>
    </location>
</feature>
<feature type="modified residue" description="Omega-N-methylarginine; alternate" evidence="2">
    <location>
        <position position="97"/>
    </location>
</feature>
<feature type="modified residue" description="Asymmetric dimethylarginine; alternate" evidence="2">
    <location>
        <position position="109"/>
    </location>
</feature>
<feature type="modified residue" description="Omega-N-methylarginine; alternate" evidence="2">
    <location>
        <position position="109"/>
    </location>
</feature>
<feature type="modified residue" description="Omega-N-methylarginine" evidence="2">
    <location>
        <position position="111"/>
    </location>
</feature>
<feature type="modified residue" description="Phosphoserine" evidence="2">
    <location>
        <position position="133"/>
    </location>
</feature>
<feature type="modified residue" description="N6-acetyllysine" evidence="2">
    <location>
        <position position="179"/>
    </location>
</feature>
<feature type="modified residue" description="Phosphoserine" evidence="2">
    <location>
        <position position="199"/>
    </location>
</feature>
<feature type="modified residue" description="Phosphoserine" evidence="2">
    <location>
        <position position="201"/>
    </location>
</feature>
<feature type="modified residue" description="Phosphotyrosine" evidence="2">
    <location>
        <position position="202"/>
    </location>
</feature>
<feature type="modified residue" description="Phosphoserine" evidence="2">
    <location>
        <position position="205"/>
    </location>
</feature>
<feature type="modified residue" description="Phosphoserine" evidence="2">
    <location>
        <position position="207"/>
    </location>
</feature>
<feature type="modified residue" description="Phosphoserine" evidence="2">
    <location>
        <position position="209"/>
    </location>
</feature>
<feature type="modified residue" description="Phosphoserine" evidence="2">
    <location>
        <position position="231"/>
    </location>
</feature>
<feature type="modified residue" description="Phosphoserine" evidence="2">
    <location>
        <position position="234"/>
    </location>
</feature>
<feature type="modified residue" description="Phosphoserine" evidence="2">
    <location>
        <position position="238"/>
    </location>
</feature>
<feature type="cross-link" description="Glycyl lysine isopeptide (Lys-Gly) (interchain with G-Cter in SUMO2)" evidence="2">
    <location>
        <position position="30"/>
    </location>
</feature>
<feature type="cross-link" description="Glycyl lysine isopeptide (Lys-Gly) (interchain with G-Cter in SUMO2); alternate" evidence="2">
    <location>
        <position position="38"/>
    </location>
</feature>
<accession>Q3YLA6</accession>
<name>SRSF1_PIG</name>
<comment type="function">
    <text evidence="2">Plays a role in preventing exon skipping, ensuring the accuracy of splicing and regulating alternative splicing. Interacts with other spliceosomal components, via the RS domains, to form a bridge between the 5'- and 3'-splice site binding components, U1 snRNP and U2AF. Can stimulate binding of U1 snRNP to a 5'-splice site-containing pre-mRNA. Binds to purine-rich RNA sequences, either the octamer, 5'-RGAAGAAC-3' (r=A or G) or the decamers, AGGACAGAGC/AGGACGAAGC. Binds preferentially to the 5'-CGAGGCG-3' motif in vitro. Three copies of the octamer constitute a powerful splicing enhancer in vitro, the ASF/SF2 splicing enhancer (ASE) which can specifically activate ASE-dependent splicing. May function as export adapter involved in mRNA nuclear export through the TAP/NXF1 pathway (By similarity).</text>
</comment>
<comment type="subunit">
    <text evidence="2 3">Consists of two polypeptides of p32 and p33. Identified in the spliceosome C complex. Component of a ribonucleoprotein complex containing mRNAs and RNA-binding proteins including DDX5, HNRNPH2 and SRSF1 as well as splicing regulator ARVCF. In vitro, self-associates and binds SRSF2, SNRNP70 and U2AF1 but not U2AF2. Binds SREK1/SFRS12. Interacts with SAFB/SAFB1. Interacts with PSIP1/LEDGF. Interacts with RSRC1 (via Arg/Ser-rich domain). Interacts with ZRSR2/U2AF1-RS2. Interacts with CCDC55 (via C-terminus). Interacts with SRPK1 and a sliding docking interaction is essential for its sequential and processive phosphorylation by SRPK1. Interacts with NXF1. Interacts with CCNL1, CCNL2 and CDK11B. Interacts with RRP1B. Interacts (when phosphorylated in its RS domain) with TNPO3; promoting nuclear import. Interacts with ILDR1 (via C-terminus) and ILDR2.</text>
</comment>
<comment type="subcellular location">
    <subcellularLocation>
        <location evidence="2">Cytoplasm</location>
    </subcellularLocation>
    <subcellularLocation>
        <location evidence="2">Nucleus speckle</location>
    </subcellularLocation>
    <text evidence="2">In nuclear speckles. Shuttles between the nucleus and the cytoplasm. Nuclear import is mediated via interaction with TNPO3.</text>
</comment>
<comment type="domain">
    <text evidence="2">The RRM 2 domain plays an important role in governing both the binding mode and the phosphorylation mechanism of the RS domain by SRPK1. RS domain and RRM 2 are uniquely positioned to initiate a highly directional (C-terminus to N-terminus) phosphorylation reaction in which the RS domain slides through an extended electronegative channel separating the docking groove of SRPK1 and the active site. RRM 2 binds toward the periphery of the active site and guides the directional phosphorylation mechanism. Both the RS domain and an RRM domain are required for nucleocytoplasmic shuttling (By similarity).</text>
</comment>
<comment type="PTM">
    <text evidence="2">Phosphorylated by CLK1, CLK2, CLK3 and CLK4. Phosphorylated by SRPK1 at multiple serines in its RS domain via a directional (C-terminal to N-terminal) and a dual-track mechanism incorporating both processive phosphorylation (in which the kinase stays attached to the substrate after each round of phosphorylation) and distributive phosphorylation steps (in which the kinase and substrate dissociate after each phosphorylation event). The RS domain of SRSF1 binds to a docking groove in the large lobe of the kinase domain of SRPK1 and this induces certain structural changes in SRPK1 and/or RRM 2 domain of SRSF1, allowing RRM 2 to bind the kinase and initiate phosphorylation. The cycles continue for several phosphorylation steps in a processive manner (steps 1-8) until the last few phosphorylation steps (approximately steps 9-12). During that time, a mechanical stress induces the unfolding of the beta-4 motif in RRM 2, which then docks at the docking groove of SRPK1. This also signals RRM 2 to begin to dissociate, which facilitates SRSF1 dissociation after phosphorylation is completed (By similarity).</text>
</comment>
<comment type="PTM">
    <text evidence="2">Asymmetrically dimethylated at arginines, probably by PRMT1, methylation promotes localization to nuclear speckles.</text>
</comment>
<comment type="similarity">
    <text evidence="7">Belongs to the splicing factor SR family.</text>
</comment>
<evidence type="ECO:0000250" key="1"/>
<evidence type="ECO:0000250" key="2">
    <source>
        <dbReference type="UniProtKB" id="Q07955"/>
    </source>
</evidence>
<evidence type="ECO:0000250" key="3">
    <source>
        <dbReference type="UniProtKB" id="Q6PDM2"/>
    </source>
</evidence>
<evidence type="ECO:0000255" key="4"/>
<evidence type="ECO:0000255" key="5">
    <source>
        <dbReference type="PROSITE-ProRule" id="PRU00176"/>
    </source>
</evidence>
<evidence type="ECO:0000256" key="6">
    <source>
        <dbReference type="SAM" id="MobiDB-lite"/>
    </source>
</evidence>
<evidence type="ECO:0000305" key="7"/>